<keyword id="KW-0067">ATP-binding</keyword>
<keyword id="KW-0436">Ligase</keyword>
<keyword id="KW-0547">Nucleotide-binding</keyword>
<keyword id="KW-0648">Protein biosynthesis</keyword>
<proteinExistence type="inferred from homology"/>
<protein>
    <recommendedName>
        <fullName evidence="1">Aspartyl/glutamyl-tRNA(Asn/Gln) amidotransferase subunit C</fullName>
        <shortName evidence="1">Asp/Glu-ADT subunit C</shortName>
        <ecNumber evidence="1">6.3.5.-</ecNumber>
    </recommendedName>
</protein>
<feature type="chain" id="PRO_1000016094" description="Aspartyl/glutamyl-tRNA(Asn/Gln) amidotransferase subunit C">
    <location>
        <begin position="1"/>
        <end position="99"/>
    </location>
</feature>
<name>GATC_BURTA</name>
<dbReference type="EC" id="6.3.5.-" evidence="1"/>
<dbReference type="EMBL" id="CP000086">
    <property type="protein sequence ID" value="ABC38557.1"/>
    <property type="molecule type" value="Genomic_DNA"/>
</dbReference>
<dbReference type="RefSeq" id="WP_009893592.1">
    <property type="nucleotide sequence ID" value="NZ_CP008785.1"/>
</dbReference>
<dbReference type="SMR" id="Q2T294"/>
<dbReference type="GeneID" id="45119919"/>
<dbReference type="KEGG" id="bte:BTH_I0147"/>
<dbReference type="HOGENOM" id="CLU_105899_2_2_4"/>
<dbReference type="Proteomes" id="UP000001930">
    <property type="component" value="Chromosome I"/>
</dbReference>
<dbReference type="GO" id="GO:0050566">
    <property type="term" value="F:asparaginyl-tRNA synthase (glutamine-hydrolyzing) activity"/>
    <property type="evidence" value="ECO:0007669"/>
    <property type="project" value="RHEA"/>
</dbReference>
<dbReference type="GO" id="GO:0005524">
    <property type="term" value="F:ATP binding"/>
    <property type="evidence" value="ECO:0007669"/>
    <property type="project" value="UniProtKB-KW"/>
</dbReference>
<dbReference type="GO" id="GO:0050567">
    <property type="term" value="F:glutaminyl-tRNA synthase (glutamine-hydrolyzing) activity"/>
    <property type="evidence" value="ECO:0007669"/>
    <property type="project" value="UniProtKB-UniRule"/>
</dbReference>
<dbReference type="GO" id="GO:0070681">
    <property type="term" value="P:glutaminyl-tRNAGln biosynthesis via transamidation"/>
    <property type="evidence" value="ECO:0007669"/>
    <property type="project" value="TreeGrafter"/>
</dbReference>
<dbReference type="GO" id="GO:0006450">
    <property type="term" value="P:regulation of translational fidelity"/>
    <property type="evidence" value="ECO:0007669"/>
    <property type="project" value="InterPro"/>
</dbReference>
<dbReference type="GO" id="GO:0006412">
    <property type="term" value="P:translation"/>
    <property type="evidence" value="ECO:0007669"/>
    <property type="project" value="UniProtKB-UniRule"/>
</dbReference>
<dbReference type="Gene3D" id="1.10.20.60">
    <property type="entry name" value="Glu-tRNAGln amidotransferase C subunit, N-terminal domain"/>
    <property type="match status" value="1"/>
</dbReference>
<dbReference type="HAMAP" id="MF_00122">
    <property type="entry name" value="GatC"/>
    <property type="match status" value="1"/>
</dbReference>
<dbReference type="InterPro" id="IPR036113">
    <property type="entry name" value="Asp/Glu-ADT_sf_sub_c"/>
</dbReference>
<dbReference type="InterPro" id="IPR003837">
    <property type="entry name" value="GatC"/>
</dbReference>
<dbReference type="NCBIfam" id="TIGR00135">
    <property type="entry name" value="gatC"/>
    <property type="match status" value="1"/>
</dbReference>
<dbReference type="PANTHER" id="PTHR15004">
    <property type="entry name" value="GLUTAMYL-TRNA(GLN) AMIDOTRANSFERASE SUBUNIT C, MITOCHONDRIAL"/>
    <property type="match status" value="1"/>
</dbReference>
<dbReference type="PANTHER" id="PTHR15004:SF0">
    <property type="entry name" value="GLUTAMYL-TRNA(GLN) AMIDOTRANSFERASE SUBUNIT C, MITOCHONDRIAL"/>
    <property type="match status" value="1"/>
</dbReference>
<dbReference type="Pfam" id="PF02686">
    <property type="entry name" value="GatC"/>
    <property type="match status" value="1"/>
</dbReference>
<dbReference type="SUPFAM" id="SSF141000">
    <property type="entry name" value="Glu-tRNAGln amidotransferase C subunit"/>
    <property type="match status" value="1"/>
</dbReference>
<sequence length="99" mass="11071">MALTLTDVKRIAHLARLEMADADAERTLTQLNEFFGLVEQMQAVDTTGIAPLAHPIEQILEVAQRLRDDVVTEHVNRDDNQRPAPAVQDGLYLVPKVIE</sequence>
<gene>
    <name evidence="1" type="primary">gatC</name>
    <name type="ordered locus">BTH_I0147</name>
</gene>
<organism>
    <name type="scientific">Burkholderia thailandensis (strain ATCC 700388 / DSM 13276 / CCUG 48851 / CIP 106301 / E264)</name>
    <dbReference type="NCBI Taxonomy" id="271848"/>
    <lineage>
        <taxon>Bacteria</taxon>
        <taxon>Pseudomonadati</taxon>
        <taxon>Pseudomonadota</taxon>
        <taxon>Betaproteobacteria</taxon>
        <taxon>Burkholderiales</taxon>
        <taxon>Burkholderiaceae</taxon>
        <taxon>Burkholderia</taxon>
        <taxon>pseudomallei group</taxon>
    </lineage>
</organism>
<evidence type="ECO:0000255" key="1">
    <source>
        <dbReference type="HAMAP-Rule" id="MF_00122"/>
    </source>
</evidence>
<accession>Q2T294</accession>
<comment type="function">
    <text evidence="1">Allows the formation of correctly charged Asn-tRNA(Asn) or Gln-tRNA(Gln) through the transamidation of misacylated Asp-tRNA(Asn) or Glu-tRNA(Gln) in organisms which lack either or both of asparaginyl-tRNA or glutaminyl-tRNA synthetases. The reaction takes place in the presence of glutamine and ATP through an activated phospho-Asp-tRNA(Asn) or phospho-Glu-tRNA(Gln).</text>
</comment>
<comment type="catalytic activity">
    <reaction evidence="1">
        <text>L-glutamyl-tRNA(Gln) + L-glutamine + ATP + H2O = L-glutaminyl-tRNA(Gln) + L-glutamate + ADP + phosphate + H(+)</text>
        <dbReference type="Rhea" id="RHEA:17521"/>
        <dbReference type="Rhea" id="RHEA-COMP:9681"/>
        <dbReference type="Rhea" id="RHEA-COMP:9684"/>
        <dbReference type="ChEBI" id="CHEBI:15377"/>
        <dbReference type="ChEBI" id="CHEBI:15378"/>
        <dbReference type="ChEBI" id="CHEBI:29985"/>
        <dbReference type="ChEBI" id="CHEBI:30616"/>
        <dbReference type="ChEBI" id="CHEBI:43474"/>
        <dbReference type="ChEBI" id="CHEBI:58359"/>
        <dbReference type="ChEBI" id="CHEBI:78520"/>
        <dbReference type="ChEBI" id="CHEBI:78521"/>
        <dbReference type="ChEBI" id="CHEBI:456216"/>
    </reaction>
</comment>
<comment type="catalytic activity">
    <reaction evidence="1">
        <text>L-aspartyl-tRNA(Asn) + L-glutamine + ATP + H2O = L-asparaginyl-tRNA(Asn) + L-glutamate + ADP + phosphate + 2 H(+)</text>
        <dbReference type="Rhea" id="RHEA:14513"/>
        <dbReference type="Rhea" id="RHEA-COMP:9674"/>
        <dbReference type="Rhea" id="RHEA-COMP:9677"/>
        <dbReference type="ChEBI" id="CHEBI:15377"/>
        <dbReference type="ChEBI" id="CHEBI:15378"/>
        <dbReference type="ChEBI" id="CHEBI:29985"/>
        <dbReference type="ChEBI" id="CHEBI:30616"/>
        <dbReference type="ChEBI" id="CHEBI:43474"/>
        <dbReference type="ChEBI" id="CHEBI:58359"/>
        <dbReference type="ChEBI" id="CHEBI:78515"/>
        <dbReference type="ChEBI" id="CHEBI:78516"/>
        <dbReference type="ChEBI" id="CHEBI:456216"/>
    </reaction>
</comment>
<comment type="subunit">
    <text evidence="1">Heterotrimer of A, B and C subunits.</text>
</comment>
<comment type="similarity">
    <text evidence="1">Belongs to the GatC family.</text>
</comment>
<reference key="1">
    <citation type="journal article" date="2005" name="BMC Genomics">
        <title>Bacterial genome adaptation to niches: divergence of the potential virulence genes in three Burkholderia species of different survival strategies.</title>
        <authorList>
            <person name="Kim H.S."/>
            <person name="Schell M.A."/>
            <person name="Yu Y."/>
            <person name="Ulrich R.L."/>
            <person name="Sarria S.H."/>
            <person name="Nierman W.C."/>
            <person name="DeShazer D."/>
        </authorList>
    </citation>
    <scope>NUCLEOTIDE SEQUENCE [LARGE SCALE GENOMIC DNA]</scope>
    <source>
        <strain>ATCC 700388 / DSM 13276 / CCUG 48851 / CIP 106301 / E264</strain>
    </source>
</reference>